<evidence type="ECO:0000255" key="1">
    <source>
        <dbReference type="HAMAP-Rule" id="MF_00410"/>
    </source>
</evidence>
<evidence type="ECO:0000269" key="2">
    <source>
    </source>
</evidence>
<evidence type="ECO:0007744" key="3">
    <source>
        <dbReference type="PDB" id="4V6U"/>
    </source>
</evidence>
<organism>
    <name type="scientific">Pyrococcus furiosus (strain ATCC 43587 / DSM 3638 / JCM 8422 / Vc1)</name>
    <dbReference type="NCBI Taxonomy" id="186497"/>
    <lineage>
        <taxon>Archaea</taxon>
        <taxon>Methanobacteriati</taxon>
        <taxon>Methanobacteriota</taxon>
        <taxon>Thermococci</taxon>
        <taxon>Thermococcales</taxon>
        <taxon>Thermococcaceae</taxon>
        <taxon>Pyrococcus</taxon>
    </lineage>
</organism>
<protein>
    <recommendedName>
        <fullName evidence="1">Large ribosomal subunit protein eL31</fullName>
    </recommendedName>
    <alternativeName>
        <fullName>50S ribosomal protein L31e</fullName>
    </alternativeName>
</protein>
<comment type="subunit">
    <text evidence="2">Part of the 50S ribosomal subunit.</text>
</comment>
<comment type="similarity">
    <text evidence="1">Belongs to the eukaryotic ribosomal protein eL31 family.</text>
</comment>
<reference key="1">
    <citation type="journal article" date="1999" name="Genetics">
        <title>Divergence of the hyperthermophilic archaea Pyrococcus furiosus and P. horikoshii inferred from complete genomic sequences.</title>
        <authorList>
            <person name="Maeder D.L."/>
            <person name="Weiss R.B."/>
            <person name="Dunn D.M."/>
            <person name="Cherry J.L."/>
            <person name="Gonzalez J.M."/>
            <person name="DiRuggiero J."/>
            <person name="Robb F.T."/>
        </authorList>
    </citation>
    <scope>NUCLEOTIDE SEQUENCE [LARGE SCALE GENOMIC DNA]</scope>
    <source>
        <strain>ATCC 43587 / DSM 3638 / JCM 8422 / Vc1</strain>
    </source>
</reference>
<reference evidence="3" key="2">
    <citation type="journal article" date="2013" name="Nucleic Acids Res.">
        <title>Promiscuous behaviour of archaeal ribosomal proteins: implications for eukaryotic ribosome evolution.</title>
        <authorList>
            <person name="Armache J.P."/>
            <person name="Anger A.M."/>
            <person name="Marquez V."/>
            <person name="Franckenberg S."/>
            <person name="Frohlich T."/>
            <person name="Villa E."/>
            <person name="Berninghausen O."/>
            <person name="Thomm M."/>
            <person name="Arnold G.J."/>
            <person name="Beckmann R."/>
            <person name="Wilson D.N."/>
        </authorList>
    </citation>
    <scope>STRUCTURE BY ELECTRON MICROSCOPY (6.60 ANGSTROMS) IN THE 70S RIBOSOME</scope>
    <scope>SUBUNIT</scope>
</reference>
<name>RL31_PYRFU</name>
<sequence length="95" mass="11058">MAIKAGEEVIFTVPIKKIKKIVPRWKRAPRAVKFVREFVARHAKAQEVIIDPKVNEKIWERGIEKPPSKLRVKVKVEEEKREGEETVRIAYVTLA</sequence>
<proteinExistence type="evidence at protein level"/>
<dbReference type="EMBL" id="AE009950">
    <property type="protein sequence ID" value="AAL80502.1"/>
    <property type="molecule type" value="Genomic_DNA"/>
</dbReference>
<dbReference type="RefSeq" id="WP_014835121.1">
    <property type="nucleotide sequence ID" value="NZ_CP023154.1"/>
</dbReference>
<dbReference type="PDB" id="4V6U">
    <property type="method" value="EM"/>
    <property type="resolution" value="6.60 A"/>
    <property type="chains" value="Ba=1-95"/>
</dbReference>
<dbReference type="PDBsum" id="4V6U"/>
<dbReference type="SMR" id="Q8U3S7"/>
<dbReference type="STRING" id="186497.PF0378"/>
<dbReference type="PaxDb" id="186497-PF0378"/>
<dbReference type="KEGG" id="pfu:PF0378"/>
<dbReference type="PATRIC" id="fig|186497.12.peg.393"/>
<dbReference type="eggNOG" id="arCOG04473">
    <property type="taxonomic scope" value="Archaea"/>
</dbReference>
<dbReference type="HOGENOM" id="CLU_112570_3_2_2"/>
<dbReference type="OrthoDB" id="10127at2157"/>
<dbReference type="PhylomeDB" id="Q8U3S7"/>
<dbReference type="Proteomes" id="UP000001013">
    <property type="component" value="Chromosome"/>
</dbReference>
<dbReference type="GO" id="GO:0022625">
    <property type="term" value="C:cytosolic large ribosomal subunit"/>
    <property type="evidence" value="ECO:0007669"/>
    <property type="project" value="TreeGrafter"/>
</dbReference>
<dbReference type="GO" id="GO:0003735">
    <property type="term" value="F:structural constituent of ribosome"/>
    <property type="evidence" value="ECO:0007669"/>
    <property type="project" value="InterPro"/>
</dbReference>
<dbReference type="GO" id="GO:0002181">
    <property type="term" value="P:cytoplasmic translation"/>
    <property type="evidence" value="ECO:0007669"/>
    <property type="project" value="TreeGrafter"/>
</dbReference>
<dbReference type="CDD" id="cd00463">
    <property type="entry name" value="Ribosomal_L31e"/>
    <property type="match status" value="1"/>
</dbReference>
<dbReference type="FunFam" id="3.10.440.10:FF:000005">
    <property type="entry name" value="50S ribosomal protein L31e"/>
    <property type="match status" value="1"/>
</dbReference>
<dbReference type="Gene3D" id="3.10.440.10">
    <property type="match status" value="1"/>
</dbReference>
<dbReference type="HAMAP" id="MF_00410">
    <property type="entry name" value="Ribosomal_eL31"/>
    <property type="match status" value="1"/>
</dbReference>
<dbReference type="InterPro" id="IPR000054">
    <property type="entry name" value="Ribosomal_eL31"/>
</dbReference>
<dbReference type="InterPro" id="IPR020052">
    <property type="entry name" value="Ribosomal_eL31_CS"/>
</dbReference>
<dbReference type="InterPro" id="IPR023621">
    <property type="entry name" value="Ribosomal_eL31_dom_sf"/>
</dbReference>
<dbReference type="NCBIfam" id="NF002258">
    <property type="entry name" value="PRK01192.1-1"/>
    <property type="match status" value="1"/>
</dbReference>
<dbReference type="PANTHER" id="PTHR10956">
    <property type="entry name" value="60S RIBOSOMAL PROTEIN L31"/>
    <property type="match status" value="1"/>
</dbReference>
<dbReference type="PANTHER" id="PTHR10956:SF0">
    <property type="entry name" value="60S RIBOSOMAL PROTEIN L31"/>
    <property type="match status" value="1"/>
</dbReference>
<dbReference type="Pfam" id="PF01198">
    <property type="entry name" value="Ribosomal_L31e"/>
    <property type="match status" value="1"/>
</dbReference>
<dbReference type="SMART" id="SM01380">
    <property type="entry name" value="Ribosomal_L31e"/>
    <property type="match status" value="1"/>
</dbReference>
<dbReference type="SUPFAM" id="SSF54575">
    <property type="entry name" value="Ribosomal protein L31e"/>
    <property type="match status" value="1"/>
</dbReference>
<dbReference type="PROSITE" id="PS01144">
    <property type="entry name" value="RIBOSOMAL_L31E"/>
    <property type="match status" value="1"/>
</dbReference>
<gene>
    <name evidence="1" type="primary">rpl31e</name>
    <name type="ordered locus">PF0378</name>
</gene>
<feature type="chain" id="PRO_0000153802" description="Large ribosomal subunit protein eL31">
    <location>
        <begin position="1"/>
        <end position="95"/>
    </location>
</feature>
<accession>Q8U3S7</accession>
<keyword id="KW-0002">3D-structure</keyword>
<keyword id="KW-1185">Reference proteome</keyword>
<keyword id="KW-0687">Ribonucleoprotein</keyword>
<keyword id="KW-0689">Ribosomal protein</keyword>